<sequence length="106" mass="12196">MSTEKVAFRMFLIPGCAAEYQRRHAAIWPELSALLRAAGVSDYSIYLDQEHHVLFATLRRSRAHGMDALPAHPVMRRWWAHMADIMRYGTDGTPIVEPLPCMFHMD</sequence>
<gene>
    <name evidence="1" type="primary">rhaM</name>
    <name type="ordered locus">Veis_2123</name>
</gene>
<evidence type="ECO:0000255" key="1">
    <source>
        <dbReference type="HAMAP-Rule" id="MF_01663"/>
    </source>
</evidence>
<name>RHAM_VEREI</name>
<reference key="1">
    <citation type="submission" date="2006-12" db="EMBL/GenBank/DDBJ databases">
        <title>Complete sequence of chromosome 1 of Verminephrobacter eiseniae EF01-2.</title>
        <authorList>
            <person name="Copeland A."/>
            <person name="Lucas S."/>
            <person name="Lapidus A."/>
            <person name="Barry K."/>
            <person name="Detter J.C."/>
            <person name="Glavina del Rio T."/>
            <person name="Dalin E."/>
            <person name="Tice H."/>
            <person name="Pitluck S."/>
            <person name="Chertkov O."/>
            <person name="Brettin T."/>
            <person name="Bruce D."/>
            <person name="Han C."/>
            <person name="Tapia R."/>
            <person name="Gilna P."/>
            <person name="Schmutz J."/>
            <person name="Larimer F."/>
            <person name="Land M."/>
            <person name="Hauser L."/>
            <person name="Kyrpides N."/>
            <person name="Kim E."/>
            <person name="Stahl D."/>
            <person name="Richardson P."/>
        </authorList>
    </citation>
    <scope>NUCLEOTIDE SEQUENCE [LARGE SCALE GENOMIC DNA]</scope>
    <source>
        <strain>EF01-2</strain>
    </source>
</reference>
<protein>
    <recommendedName>
        <fullName evidence="1">L-rhamnose mutarotase</fullName>
        <ecNumber evidence="1">5.1.3.32</ecNumber>
    </recommendedName>
    <alternativeName>
        <fullName evidence="1">Rhamnose 1-epimerase</fullName>
    </alternativeName>
    <alternativeName>
        <fullName evidence="1">Type-3 mutarotase</fullName>
    </alternativeName>
</protein>
<feature type="chain" id="PRO_0000344610" description="L-rhamnose mutarotase">
    <location>
        <begin position="1"/>
        <end position="106"/>
    </location>
</feature>
<feature type="active site" description="Proton donor" evidence="1">
    <location>
        <position position="24"/>
    </location>
</feature>
<feature type="binding site" evidence="1">
    <location>
        <position position="20"/>
    </location>
    <ligand>
        <name>substrate</name>
    </ligand>
</feature>
<feature type="binding site" evidence="1">
    <location>
        <position position="43"/>
    </location>
    <ligand>
        <name>substrate</name>
    </ligand>
</feature>
<feature type="binding site" evidence="1">
    <location>
        <begin position="78"/>
        <end position="79"/>
    </location>
    <ligand>
        <name>substrate</name>
    </ligand>
</feature>
<organism>
    <name type="scientific">Verminephrobacter eiseniae (strain EF01-2)</name>
    <dbReference type="NCBI Taxonomy" id="391735"/>
    <lineage>
        <taxon>Bacteria</taxon>
        <taxon>Pseudomonadati</taxon>
        <taxon>Pseudomonadota</taxon>
        <taxon>Betaproteobacteria</taxon>
        <taxon>Burkholderiales</taxon>
        <taxon>Comamonadaceae</taxon>
        <taxon>Verminephrobacter</taxon>
    </lineage>
</organism>
<comment type="function">
    <text evidence="1">Involved in the anomeric conversion of L-rhamnose.</text>
</comment>
<comment type="catalytic activity">
    <reaction evidence="1">
        <text>alpha-L-rhamnose = beta-L-rhamnose</text>
        <dbReference type="Rhea" id="RHEA:25584"/>
        <dbReference type="ChEBI" id="CHEBI:27586"/>
        <dbReference type="ChEBI" id="CHEBI:27907"/>
        <dbReference type="EC" id="5.1.3.32"/>
    </reaction>
</comment>
<comment type="pathway">
    <text evidence="1">Carbohydrate metabolism; L-rhamnose metabolism.</text>
</comment>
<comment type="subunit">
    <text evidence="1">Homodimer.</text>
</comment>
<comment type="subcellular location">
    <subcellularLocation>
        <location evidence="1">Cytoplasm</location>
    </subcellularLocation>
</comment>
<comment type="similarity">
    <text evidence="1">Belongs to the rhamnose mutarotase family.</text>
</comment>
<dbReference type="EC" id="5.1.3.32" evidence="1"/>
<dbReference type="EMBL" id="CP000542">
    <property type="protein sequence ID" value="ABM57871.1"/>
    <property type="molecule type" value="Genomic_DNA"/>
</dbReference>
<dbReference type="RefSeq" id="WP_011809877.1">
    <property type="nucleotide sequence ID" value="NC_008786.1"/>
</dbReference>
<dbReference type="SMR" id="A1WJR4"/>
<dbReference type="STRING" id="391735.Veis_2123"/>
<dbReference type="GeneID" id="76460695"/>
<dbReference type="KEGG" id="vei:Veis_2123"/>
<dbReference type="eggNOG" id="COG3254">
    <property type="taxonomic scope" value="Bacteria"/>
</dbReference>
<dbReference type="HOGENOM" id="CLU_100689_2_0_4"/>
<dbReference type="OrthoDB" id="9799608at2"/>
<dbReference type="UniPathway" id="UPA00125"/>
<dbReference type="Proteomes" id="UP000000374">
    <property type="component" value="Chromosome"/>
</dbReference>
<dbReference type="GO" id="GO:0005737">
    <property type="term" value="C:cytoplasm"/>
    <property type="evidence" value="ECO:0007669"/>
    <property type="project" value="UniProtKB-SubCell"/>
</dbReference>
<dbReference type="GO" id="GO:0062192">
    <property type="term" value="F:L-rhamnose mutarotase activity"/>
    <property type="evidence" value="ECO:0007669"/>
    <property type="project" value="UniProtKB-EC"/>
</dbReference>
<dbReference type="GO" id="GO:0019301">
    <property type="term" value="P:rhamnose catabolic process"/>
    <property type="evidence" value="ECO:0007669"/>
    <property type="project" value="TreeGrafter"/>
</dbReference>
<dbReference type="Gene3D" id="3.30.70.100">
    <property type="match status" value="1"/>
</dbReference>
<dbReference type="HAMAP" id="MF_01663">
    <property type="entry name" value="L_rham_rotase"/>
    <property type="match status" value="1"/>
</dbReference>
<dbReference type="InterPro" id="IPR011008">
    <property type="entry name" value="Dimeric_a/b-barrel"/>
</dbReference>
<dbReference type="InterPro" id="IPR013448">
    <property type="entry name" value="L-rhamnose_mutarotase"/>
</dbReference>
<dbReference type="InterPro" id="IPR008000">
    <property type="entry name" value="Rham/fucose_mutarotase"/>
</dbReference>
<dbReference type="PANTHER" id="PTHR34389">
    <property type="entry name" value="L-RHAMNOSE MUTAROTASE"/>
    <property type="match status" value="1"/>
</dbReference>
<dbReference type="PANTHER" id="PTHR34389:SF2">
    <property type="entry name" value="L-RHAMNOSE MUTAROTASE"/>
    <property type="match status" value="1"/>
</dbReference>
<dbReference type="Pfam" id="PF05336">
    <property type="entry name" value="rhaM"/>
    <property type="match status" value="1"/>
</dbReference>
<dbReference type="SUPFAM" id="SSF54909">
    <property type="entry name" value="Dimeric alpha+beta barrel"/>
    <property type="match status" value="1"/>
</dbReference>
<accession>A1WJR4</accession>
<proteinExistence type="inferred from homology"/>
<keyword id="KW-0119">Carbohydrate metabolism</keyword>
<keyword id="KW-0963">Cytoplasm</keyword>
<keyword id="KW-0413">Isomerase</keyword>
<keyword id="KW-1185">Reference proteome</keyword>
<keyword id="KW-0684">Rhamnose metabolism</keyword>